<feature type="chain" id="PRO_0000267679" description="3-octaprenyl-4-hydroxybenzoate carboxy-lyase">
    <location>
        <begin position="1"/>
        <end position="488"/>
    </location>
</feature>
<feature type="active site" description="Proton donor" evidence="1">
    <location>
        <position position="287"/>
    </location>
</feature>
<feature type="binding site" evidence="1">
    <location>
        <position position="172"/>
    </location>
    <ligand>
        <name>Mn(2+)</name>
        <dbReference type="ChEBI" id="CHEBI:29035"/>
    </ligand>
</feature>
<feature type="binding site" evidence="1">
    <location>
        <begin position="175"/>
        <end position="177"/>
    </location>
    <ligand>
        <name>prenylated FMN</name>
        <dbReference type="ChEBI" id="CHEBI:87746"/>
    </ligand>
</feature>
<feature type="binding site" evidence="1">
    <location>
        <begin position="189"/>
        <end position="191"/>
    </location>
    <ligand>
        <name>prenylated FMN</name>
        <dbReference type="ChEBI" id="CHEBI:87746"/>
    </ligand>
</feature>
<feature type="binding site" evidence="1">
    <location>
        <begin position="194"/>
        <end position="195"/>
    </location>
    <ligand>
        <name>prenylated FMN</name>
        <dbReference type="ChEBI" id="CHEBI:87746"/>
    </ligand>
</feature>
<feature type="binding site" evidence="1">
    <location>
        <position position="238"/>
    </location>
    <ligand>
        <name>Mn(2+)</name>
        <dbReference type="ChEBI" id="CHEBI:29035"/>
    </ligand>
</feature>
<dbReference type="EC" id="4.1.1.98" evidence="1"/>
<dbReference type="EMBL" id="CR954246">
    <property type="protein sequence ID" value="CAI85214.1"/>
    <property type="molecule type" value="Genomic_DNA"/>
</dbReference>
<dbReference type="SMR" id="Q3IDJ8"/>
<dbReference type="STRING" id="326442.PSHAa0105"/>
<dbReference type="KEGG" id="pha:PSHAa0105"/>
<dbReference type="PATRIC" id="fig|326442.8.peg.104"/>
<dbReference type="eggNOG" id="COG0043">
    <property type="taxonomic scope" value="Bacteria"/>
</dbReference>
<dbReference type="HOGENOM" id="CLU_023348_4_1_6"/>
<dbReference type="BioCyc" id="PHAL326442:PSHA_RS00535-MONOMER"/>
<dbReference type="UniPathway" id="UPA00232"/>
<dbReference type="Proteomes" id="UP000006843">
    <property type="component" value="Chromosome I"/>
</dbReference>
<dbReference type="GO" id="GO:0005829">
    <property type="term" value="C:cytosol"/>
    <property type="evidence" value="ECO:0007669"/>
    <property type="project" value="TreeGrafter"/>
</dbReference>
<dbReference type="GO" id="GO:0005886">
    <property type="term" value="C:plasma membrane"/>
    <property type="evidence" value="ECO:0007669"/>
    <property type="project" value="UniProtKB-SubCell"/>
</dbReference>
<dbReference type="GO" id="GO:0008694">
    <property type="term" value="F:3-octaprenyl-4-hydroxybenzoate carboxy-lyase activity"/>
    <property type="evidence" value="ECO:0007669"/>
    <property type="project" value="UniProtKB-UniRule"/>
</dbReference>
<dbReference type="GO" id="GO:0046872">
    <property type="term" value="F:metal ion binding"/>
    <property type="evidence" value="ECO:0007669"/>
    <property type="project" value="UniProtKB-KW"/>
</dbReference>
<dbReference type="GO" id="GO:0006744">
    <property type="term" value="P:ubiquinone biosynthetic process"/>
    <property type="evidence" value="ECO:0007669"/>
    <property type="project" value="UniProtKB-UniRule"/>
</dbReference>
<dbReference type="FunFam" id="3.40.1670.10:FF:000001">
    <property type="entry name" value="3-octaprenyl-4-hydroxybenzoate carboxy-lyase"/>
    <property type="match status" value="1"/>
</dbReference>
<dbReference type="Gene3D" id="1.20.5.570">
    <property type="entry name" value="Single helix bin"/>
    <property type="match status" value="1"/>
</dbReference>
<dbReference type="Gene3D" id="3.40.1670.10">
    <property type="entry name" value="UbiD C-terminal domain-like"/>
    <property type="match status" value="1"/>
</dbReference>
<dbReference type="HAMAP" id="MF_01636">
    <property type="entry name" value="UbiD"/>
    <property type="match status" value="1"/>
</dbReference>
<dbReference type="InterPro" id="IPR002830">
    <property type="entry name" value="UbiD"/>
</dbReference>
<dbReference type="InterPro" id="IPR049381">
    <property type="entry name" value="UbiD-like_C"/>
</dbReference>
<dbReference type="InterPro" id="IPR049383">
    <property type="entry name" value="UbiD-like_N"/>
</dbReference>
<dbReference type="InterPro" id="IPR023677">
    <property type="entry name" value="UbiD_bacteria"/>
</dbReference>
<dbReference type="InterPro" id="IPR048304">
    <property type="entry name" value="UbiD_Rift_dom"/>
</dbReference>
<dbReference type="NCBIfam" id="NF008175">
    <property type="entry name" value="PRK10922.1"/>
    <property type="match status" value="1"/>
</dbReference>
<dbReference type="NCBIfam" id="TIGR00148">
    <property type="entry name" value="UbiD family decarboxylase"/>
    <property type="match status" value="1"/>
</dbReference>
<dbReference type="PANTHER" id="PTHR30108">
    <property type="entry name" value="3-OCTAPRENYL-4-HYDROXYBENZOATE CARBOXY-LYASE-RELATED"/>
    <property type="match status" value="1"/>
</dbReference>
<dbReference type="PANTHER" id="PTHR30108:SF17">
    <property type="entry name" value="FERULIC ACID DECARBOXYLASE 1"/>
    <property type="match status" value="1"/>
</dbReference>
<dbReference type="Pfam" id="PF01977">
    <property type="entry name" value="UbiD"/>
    <property type="match status" value="1"/>
</dbReference>
<dbReference type="Pfam" id="PF20696">
    <property type="entry name" value="UbiD_C"/>
    <property type="match status" value="1"/>
</dbReference>
<dbReference type="Pfam" id="PF20695">
    <property type="entry name" value="UbiD_N"/>
    <property type="match status" value="1"/>
</dbReference>
<dbReference type="SUPFAM" id="SSF50475">
    <property type="entry name" value="FMN-binding split barrel"/>
    <property type="match status" value="1"/>
</dbReference>
<dbReference type="SUPFAM" id="SSF143968">
    <property type="entry name" value="UbiD C-terminal domain-like"/>
    <property type="match status" value="1"/>
</dbReference>
<accession>Q3IDJ8</accession>
<organism>
    <name type="scientific">Pseudoalteromonas translucida (strain TAC 125)</name>
    <dbReference type="NCBI Taxonomy" id="326442"/>
    <lineage>
        <taxon>Bacteria</taxon>
        <taxon>Pseudomonadati</taxon>
        <taxon>Pseudomonadota</taxon>
        <taxon>Gammaproteobacteria</taxon>
        <taxon>Alteromonadales</taxon>
        <taxon>Pseudoalteromonadaceae</taxon>
        <taxon>Pseudoalteromonas</taxon>
    </lineage>
</organism>
<evidence type="ECO:0000255" key="1">
    <source>
        <dbReference type="HAMAP-Rule" id="MF_01636"/>
    </source>
</evidence>
<name>UBID_PSET1</name>
<reference key="1">
    <citation type="journal article" date="2005" name="Genome Res.">
        <title>Coping with cold: the genome of the versatile marine Antarctica bacterium Pseudoalteromonas haloplanktis TAC125.</title>
        <authorList>
            <person name="Medigue C."/>
            <person name="Krin E."/>
            <person name="Pascal G."/>
            <person name="Barbe V."/>
            <person name="Bernsel A."/>
            <person name="Bertin P.N."/>
            <person name="Cheung F."/>
            <person name="Cruveiller S."/>
            <person name="D'Amico S."/>
            <person name="Duilio A."/>
            <person name="Fang G."/>
            <person name="Feller G."/>
            <person name="Ho C."/>
            <person name="Mangenot S."/>
            <person name="Marino G."/>
            <person name="Nilsson J."/>
            <person name="Parrilli E."/>
            <person name="Rocha E.P.C."/>
            <person name="Rouy Z."/>
            <person name="Sekowska A."/>
            <person name="Tutino M.L."/>
            <person name="Vallenet D."/>
            <person name="von Heijne G."/>
            <person name="Danchin A."/>
        </authorList>
    </citation>
    <scope>NUCLEOTIDE SEQUENCE [LARGE SCALE GENOMIC DNA]</scope>
    <source>
        <strain>TAC 125</strain>
    </source>
</reference>
<sequence length="488" mass="54990">MKYKDLRDFIDLLEKRGELKRITQEIDPYLEMTEIADRTLRAKGPALLFENPKGYDIPVLANLFGTPKRVAMGMGQEDVSELREVGKLLAFLKEPEPPKGIKEALGQIPVYKQVLNMPAKEVKKAPCQEVILQGDEVDLTKLPIQHCWPGDAAPLITWGLTVTKGPYKKRQNLGIYRQQLLGKNKIIMRWLSHRGGALDFQEWCKENPGQPYPVSVALGADPATILGAVTPVPDTLSEYAFAGLLRGSKTEVVKSISNDLQVPASAEIVLEGYIMPGEMAPEGPYGDHTGYYNEVDDFPVMTVTHMTHRKNPIYHSTFTGRPPDEPAILGVALNEVFVPILQKQFPEIVDFYLPPEGCSYRMAIVTMKKQYPGHAKRVMMGVWSYLRQFMYTKFVIVCDDDINARDWEDVIWAITTRMDPARDTTLIENTPIDYLDFASPVSGLGSKMGMDATNKWPGETNREWGEPIEMDKATKDRVDDIWQSLNIL</sequence>
<keyword id="KW-1003">Cell membrane</keyword>
<keyword id="KW-0210">Decarboxylase</keyword>
<keyword id="KW-0285">Flavoprotein</keyword>
<keyword id="KW-0288">FMN</keyword>
<keyword id="KW-0456">Lyase</keyword>
<keyword id="KW-0464">Manganese</keyword>
<keyword id="KW-0472">Membrane</keyword>
<keyword id="KW-0479">Metal-binding</keyword>
<keyword id="KW-1185">Reference proteome</keyword>
<keyword id="KW-0831">Ubiquinone biosynthesis</keyword>
<comment type="function">
    <text evidence="1">Catalyzes the decarboxylation of 3-octaprenyl-4-hydroxy benzoate to 2-octaprenylphenol, an intermediate step in ubiquinone biosynthesis.</text>
</comment>
<comment type="catalytic activity">
    <reaction evidence="1">
        <text>a 4-hydroxy-3-(all-trans-polyprenyl)benzoate + H(+) = a 2-(all-trans-polyprenyl)phenol + CO2</text>
        <dbReference type="Rhea" id="RHEA:41680"/>
        <dbReference type="Rhea" id="RHEA-COMP:9514"/>
        <dbReference type="Rhea" id="RHEA-COMP:9516"/>
        <dbReference type="ChEBI" id="CHEBI:1269"/>
        <dbReference type="ChEBI" id="CHEBI:15378"/>
        <dbReference type="ChEBI" id="CHEBI:16526"/>
        <dbReference type="ChEBI" id="CHEBI:78396"/>
        <dbReference type="EC" id="4.1.1.98"/>
    </reaction>
</comment>
<comment type="cofactor">
    <cofactor evidence="1">
        <name>prenylated FMN</name>
        <dbReference type="ChEBI" id="CHEBI:87746"/>
    </cofactor>
    <text evidence="1">Binds 1 prenylated FMN per subunit.</text>
</comment>
<comment type="cofactor">
    <cofactor evidence="1">
        <name>Mn(2+)</name>
        <dbReference type="ChEBI" id="CHEBI:29035"/>
    </cofactor>
</comment>
<comment type="pathway">
    <text evidence="1">Cofactor biosynthesis; ubiquinone biosynthesis.</text>
</comment>
<comment type="subunit">
    <text evidence="1">Homohexamer.</text>
</comment>
<comment type="subcellular location">
    <subcellularLocation>
        <location evidence="1">Cell membrane</location>
        <topology evidence="1">Peripheral membrane protein</topology>
    </subcellularLocation>
</comment>
<comment type="similarity">
    <text evidence="1">Belongs to the UbiD family.</text>
</comment>
<proteinExistence type="inferred from homology"/>
<gene>
    <name evidence="1" type="primary">ubiD</name>
    <name type="ordered locus">PSHAa0105</name>
</gene>
<protein>
    <recommendedName>
        <fullName evidence="1">3-octaprenyl-4-hydroxybenzoate carboxy-lyase</fullName>
        <ecNumber evidence="1">4.1.1.98</ecNumber>
    </recommendedName>
    <alternativeName>
        <fullName evidence="1">Polyprenyl p-hydroxybenzoate decarboxylase</fullName>
    </alternativeName>
</protein>